<comment type="subcellular location">
    <subcellularLocation>
        <location evidence="2">Nucleus</location>
    </subcellularLocation>
</comment>
<comment type="tissue specificity">
    <text evidence="2">Highly expressed in prostate, rectum, and distal colon, and weakly expressed in bladder. Expressed in prostate cancer cell lines.</text>
</comment>
<feature type="chain" id="PRO_0000312417" description="Small nuclear protein PRAC1">
    <location>
        <begin position="1"/>
        <end position="57"/>
    </location>
</feature>
<feature type="region of interest" description="Disordered" evidence="1">
    <location>
        <begin position="38"/>
        <end position="57"/>
    </location>
</feature>
<feature type="sequence variant" id="VAR_051285" description="In dbSNP:rs34734055.">
    <original>A</original>
    <variation>V</variation>
    <location>
        <position position="4"/>
    </location>
</feature>
<accession>Q96KF2</accession>
<keyword id="KW-0539">Nucleus</keyword>
<keyword id="KW-1185">Reference proteome</keyword>
<reference key="1">
    <citation type="journal article" date="2001" name="Prostate">
        <title>PRAC: a novel small nuclear protein that is specifically expressed in human prostate and colon.</title>
        <authorList>
            <person name="Liu X.F."/>
            <person name="Olsson P."/>
            <person name="Wolfgang C.D."/>
            <person name="Bera T.K."/>
            <person name="Duray P."/>
            <person name="Lee B."/>
            <person name="Pastan I."/>
        </authorList>
    </citation>
    <scope>NUCLEOTIDE SEQUENCE [MRNA]</scope>
    <scope>SUBCELLULAR LOCATION</scope>
    <scope>TISSUE SPECIFICITY</scope>
    <source>
        <tissue>Prostate</tissue>
    </source>
</reference>
<reference key="2">
    <citation type="journal article" date="2006" name="Nature">
        <title>DNA sequence of human chromosome 17 and analysis of rearrangement in the human lineage.</title>
        <authorList>
            <person name="Zody M.C."/>
            <person name="Garber M."/>
            <person name="Adams D.J."/>
            <person name="Sharpe T."/>
            <person name="Harrow J."/>
            <person name="Lupski J.R."/>
            <person name="Nicholson C."/>
            <person name="Searle S.M."/>
            <person name="Wilming L."/>
            <person name="Young S.K."/>
            <person name="Abouelleil A."/>
            <person name="Allen N.R."/>
            <person name="Bi W."/>
            <person name="Bloom T."/>
            <person name="Borowsky M.L."/>
            <person name="Bugalter B.E."/>
            <person name="Butler J."/>
            <person name="Chang J.L."/>
            <person name="Chen C.-K."/>
            <person name="Cook A."/>
            <person name="Corum B."/>
            <person name="Cuomo C.A."/>
            <person name="de Jong P.J."/>
            <person name="DeCaprio D."/>
            <person name="Dewar K."/>
            <person name="FitzGerald M."/>
            <person name="Gilbert J."/>
            <person name="Gibson R."/>
            <person name="Gnerre S."/>
            <person name="Goldstein S."/>
            <person name="Grafham D.V."/>
            <person name="Grocock R."/>
            <person name="Hafez N."/>
            <person name="Hagopian D.S."/>
            <person name="Hart E."/>
            <person name="Norman C.H."/>
            <person name="Humphray S."/>
            <person name="Jaffe D.B."/>
            <person name="Jones M."/>
            <person name="Kamal M."/>
            <person name="Khodiyar V.K."/>
            <person name="LaButti K."/>
            <person name="Laird G."/>
            <person name="Lehoczky J."/>
            <person name="Liu X."/>
            <person name="Lokyitsang T."/>
            <person name="Loveland J."/>
            <person name="Lui A."/>
            <person name="Macdonald P."/>
            <person name="Major J.E."/>
            <person name="Matthews L."/>
            <person name="Mauceli E."/>
            <person name="McCarroll S.A."/>
            <person name="Mihalev A.H."/>
            <person name="Mudge J."/>
            <person name="Nguyen C."/>
            <person name="Nicol R."/>
            <person name="O'Leary S.B."/>
            <person name="Osoegawa K."/>
            <person name="Schwartz D.C."/>
            <person name="Shaw-Smith C."/>
            <person name="Stankiewicz P."/>
            <person name="Steward C."/>
            <person name="Swarbreck D."/>
            <person name="Venkataraman V."/>
            <person name="Whittaker C.A."/>
            <person name="Yang X."/>
            <person name="Zimmer A.R."/>
            <person name="Bradley A."/>
            <person name="Hubbard T."/>
            <person name="Birren B.W."/>
            <person name="Rogers J."/>
            <person name="Lander E.S."/>
            <person name="Nusbaum C."/>
        </authorList>
    </citation>
    <scope>NUCLEOTIDE SEQUENCE [LARGE SCALE GENOMIC DNA]</scope>
</reference>
<reference key="3">
    <citation type="submission" date="2005-09" db="EMBL/GenBank/DDBJ databases">
        <authorList>
            <person name="Mural R.J."/>
            <person name="Istrail S."/>
            <person name="Sutton G.G."/>
            <person name="Florea L."/>
            <person name="Halpern A.L."/>
            <person name="Mobarry C.M."/>
            <person name="Lippert R."/>
            <person name="Walenz B."/>
            <person name="Shatkay H."/>
            <person name="Dew I."/>
            <person name="Miller J.R."/>
            <person name="Flanigan M.J."/>
            <person name="Edwards N.J."/>
            <person name="Bolanos R."/>
            <person name="Fasulo D."/>
            <person name="Halldorsson B.V."/>
            <person name="Hannenhalli S."/>
            <person name="Turner R."/>
            <person name="Yooseph S."/>
            <person name="Lu F."/>
            <person name="Nusskern D.R."/>
            <person name="Shue B.C."/>
            <person name="Zheng X.H."/>
            <person name="Zhong F."/>
            <person name="Delcher A.L."/>
            <person name="Huson D.H."/>
            <person name="Kravitz S.A."/>
            <person name="Mouchard L."/>
            <person name="Reinert K."/>
            <person name="Remington K.A."/>
            <person name="Clark A.G."/>
            <person name="Waterman M.S."/>
            <person name="Eichler E.E."/>
            <person name="Adams M.D."/>
            <person name="Hunkapiller M.W."/>
            <person name="Myers E.W."/>
            <person name="Venter J.C."/>
        </authorList>
    </citation>
    <scope>NUCLEOTIDE SEQUENCE [LARGE SCALE GENOMIC DNA]</scope>
</reference>
<reference key="4">
    <citation type="journal article" date="2004" name="Genome Res.">
        <title>The status, quality, and expansion of the NIH full-length cDNA project: the Mammalian Gene Collection (MGC).</title>
        <authorList>
            <consortium name="The MGC Project Team"/>
        </authorList>
    </citation>
    <scope>NUCLEOTIDE SEQUENCE [LARGE SCALE MRNA]</scope>
    <source>
        <tissue>Prostate</tissue>
    </source>
</reference>
<organism>
    <name type="scientific">Homo sapiens</name>
    <name type="common">Human</name>
    <dbReference type="NCBI Taxonomy" id="9606"/>
    <lineage>
        <taxon>Eukaryota</taxon>
        <taxon>Metazoa</taxon>
        <taxon>Chordata</taxon>
        <taxon>Craniata</taxon>
        <taxon>Vertebrata</taxon>
        <taxon>Euteleostomi</taxon>
        <taxon>Mammalia</taxon>
        <taxon>Eutheria</taxon>
        <taxon>Euarchontoglires</taxon>
        <taxon>Primates</taxon>
        <taxon>Haplorrhini</taxon>
        <taxon>Catarrhini</taxon>
        <taxon>Hominidae</taxon>
        <taxon>Homo</taxon>
    </lineage>
</organism>
<evidence type="ECO:0000256" key="1">
    <source>
        <dbReference type="SAM" id="MobiDB-lite"/>
    </source>
</evidence>
<evidence type="ECO:0000269" key="2">
    <source>
    </source>
</evidence>
<gene>
    <name type="primary">PRAC1</name>
    <name type="synonym">C17orf92</name>
    <name type="synonym">PRAC</name>
</gene>
<protein>
    <recommendedName>
        <fullName>Small nuclear protein PRAC1</fullName>
    </recommendedName>
    <alternativeName>
        <fullName>Prostate cancer susceptibility candidate protein 1</fullName>
    </alternativeName>
    <alternativeName>
        <fullName>Prostate, rectum and colon expressed gene protein</fullName>
    </alternativeName>
</protein>
<sequence>MLCAHFSDQGPAHLTTSKSAFLSNKKTSTLKHLLGETRSDGSACNSGISGGRGRKIP</sequence>
<dbReference type="EMBL" id="AF331165">
    <property type="protein sequence ID" value="AAK38837.1"/>
    <property type="molecule type" value="mRNA"/>
</dbReference>
<dbReference type="EMBL" id="AC091179">
    <property type="status" value="NOT_ANNOTATED_CDS"/>
    <property type="molecule type" value="Genomic_DNA"/>
</dbReference>
<dbReference type="EMBL" id="CH471109">
    <property type="protein sequence ID" value="EAW94717.1"/>
    <property type="molecule type" value="Genomic_DNA"/>
</dbReference>
<dbReference type="EMBL" id="BC030950">
    <property type="protein sequence ID" value="AAH30950.1"/>
    <property type="molecule type" value="mRNA"/>
</dbReference>
<dbReference type="CCDS" id="CCDS11535.1"/>
<dbReference type="RefSeq" id="NP_115767.1">
    <property type="nucleotide sequence ID" value="NM_032391.3"/>
</dbReference>
<dbReference type="FunCoup" id="Q96KF2">
    <property type="interactions" value="6"/>
</dbReference>
<dbReference type="STRING" id="9606.ENSP00000290294"/>
<dbReference type="GlyGen" id="Q96KF2">
    <property type="glycosylation" value="1 site, 1 O-linked glycan (1 site)"/>
</dbReference>
<dbReference type="iPTMnet" id="Q96KF2"/>
<dbReference type="PhosphoSitePlus" id="Q96KF2"/>
<dbReference type="BioMuta" id="PRAC1"/>
<dbReference type="PaxDb" id="9606-ENSP00000290294"/>
<dbReference type="PeptideAtlas" id="Q96KF2"/>
<dbReference type="ProteomicsDB" id="77065"/>
<dbReference type="Antibodypedia" id="45201">
    <property type="antibodies" value="84 antibodies from 22 providers"/>
</dbReference>
<dbReference type="DNASU" id="84366"/>
<dbReference type="Ensembl" id="ENST00000290294.5">
    <property type="protein sequence ID" value="ENSP00000290294.3"/>
    <property type="gene ID" value="ENSG00000159182.5"/>
</dbReference>
<dbReference type="GeneID" id="84366"/>
<dbReference type="KEGG" id="hsa:84366"/>
<dbReference type="MANE-Select" id="ENST00000290294.5">
    <property type="protein sequence ID" value="ENSP00000290294.3"/>
    <property type="RefSeq nucleotide sequence ID" value="NM_032391.3"/>
    <property type="RefSeq protein sequence ID" value="NP_115767.1"/>
</dbReference>
<dbReference type="UCSC" id="uc002iny.4">
    <property type="organism name" value="human"/>
</dbReference>
<dbReference type="AGR" id="HGNC:30591"/>
<dbReference type="CTD" id="84366"/>
<dbReference type="DisGeNET" id="84366"/>
<dbReference type="GeneCards" id="PRAC1"/>
<dbReference type="HGNC" id="HGNC:30591">
    <property type="gene designation" value="PRAC1"/>
</dbReference>
<dbReference type="HPA" id="ENSG00000159182">
    <property type="expression patterns" value="Group enriched (intestine, prostate)"/>
</dbReference>
<dbReference type="MIM" id="609819">
    <property type="type" value="gene"/>
</dbReference>
<dbReference type="neXtProt" id="NX_Q96KF2"/>
<dbReference type="OpenTargets" id="ENSG00000159182"/>
<dbReference type="PharmGKB" id="PA164725009"/>
<dbReference type="VEuPathDB" id="HostDB:ENSG00000159182"/>
<dbReference type="eggNOG" id="ENOG502TEAX">
    <property type="taxonomic scope" value="Eukaryota"/>
</dbReference>
<dbReference type="GeneTree" id="ENSGT00940000165611"/>
<dbReference type="HOGENOM" id="CLU_2995884_0_0_1"/>
<dbReference type="InParanoid" id="Q96KF2"/>
<dbReference type="OMA" id="YLIRGPR"/>
<dbReference type="OrthoDB" id="9527731at2759"/>
<dbReference type="PAN-GO" id="Q96KF2">
    <property type="GO annotations" value="1 GO annotation based on evolutionary models"/>
</dbReference>
<dbReference type="PhylomeDB" id="Q96KF2"/>
<dbReference type="TreeFam" id="TF341666"/>
<dbReference type="PathwayCommons" id="Q96KF2"/>
<dbReference type="BioGRID-ORCS" id="84366">
    <property type="hits" value="148 hits in 1117 CRISPR screens"/>
</dbReference>
<dbReference type="ChiTaRS" id="PRAC1">
    <property type="organism name" value="human"/>
</dbReference>
<dbReference type="GenomeRNAi" id="84366"/>
<dbReference type="Pharos" id="Q96KF2">
    <property type="development level" value="Tbio"/>
</dbReference>
<dbReference type="PRO" id="PR:Q96KF2"/>
<dbReference type="Proteomes" id="UP000005640">
    <property type="component" value="Chromosome 17"/>
</dbReference>
<dbReference type="RNAct" id="Q96KF2">
    <property type="molecule type" value="protein"/>
</dbReference>
<dbReference type="Bgee" id="ENSG00000159182">
    <property type="expression patterns" value="Expressed in rectum and 65 other cell types or tissues"/>
</dbReference>
<dbReference type="GO" id="GO:0005829">
    <property type="term" value="C:cytosol"/>
    <property type="evidence" value="ECO:0000314"/>
    <property type="project" value="HPA"/>
</dbReference>
<dbReference type="GO" id="GO:0005654">
    <property type="term" value="C:nucleoplasm"/>
    <property type="evidence" value="ECO:0000314"/>
    <property type="project" value="HPA"/>
</dbReference>
<name>PRAC1_HUMAN</name>
<proteinExistence type="evidence at transcript level"/>